<comment type="function">
    <text evidence="1">Essential for muscle contraction. Involved in ovulation likely by regulating the contraction of gonadal myoepithelial sheath cells.</text>
</comment>
<comment type="subunit">
    <text evidence="1">Muscle myosin is a hexameric protein that consists of 2 heavy chain subunits (MHC), 2 alkali light chain subunits (MLC) and 2 regulatory light chain subunits (MLC-2).</text>
</comment>
<comment type="subcellular location">
    <subcellularLocation>
        <location evidence="1">Cytoplasm</location>
        <location evidence="1">Myofibril</location>
    </subcellularLocation>
    <subcellularLocation>
        <location evidence="1">Cytoplasm</location>
        <location evidence="1">Myofibril</location>
        <location evidence="1">Sarcomere</location>
        <location evidence="1">A band</location>
    </subcellularLocation>
    <text evidence="1">In myoepithelial sheath cells, forms filaments assembled in a nonstriated meshwork. Colocalizes with unc-15/paramyosin and with unc-89 to M line-like structures. Does not colocalize with beta integrin pat-3.</text>
</comment>
<comment type="domain">
    <text evidence="2">The rodlike tail sequence is highly repetitive, showing cycles of a 28-residue repeat pattern composed of 4 heptapeptides, characteristic for alpha-helical coiled coils.</text>
</comment>
<comment type="miscellaneous">
    <text evidence="1">MHC A and MHC B are found exclusively in the body wall muscle. They co-assemble into body wall thick filament.</text>
</comment>
<comment type="similarity">
    <text evidence="7">Belongs to the TRAFAC class myosin-kinesin ATPase superfamily. Myosin family.</text>
</comment>
<organism>
    <name type="scientific">Caenorhabditis briggsae</name>
    <dbReference type="NCBI Taxonomy" id="6238"/>
    <lineage>
        <taxon>Eukaryota</taxon>
        <taxon>Metazoa</taxon>
        <taxon>Ecdysozoa</taxon>
        <taxon>Nematoda</taxon>
        <taxon>Chromadorea</taxon>
        <taxon>Rhabditida</taxon>
        <taxon>Rhabditina</taxon>
        <taxon>Rhabditomorpha</taxon>
        <taxon>Rhabditoidea</taxon>
        <taxon>Rhabditidae</taxon>
        <taxon>Peloderinae</taxon>
        <taxon>Caenorhabditis</taxon>
    </lineage>
</organism>
<name>MYO3_CAEBR</name>
<protein>
    <recommendedName>
        <fullName>Myosin-3</fullName>
    </recommendedName>
    <alternativeName>
        <fullName>Myosin heavy chain A</fullName>
        <shortName>MHC A</shortName>
    </alternativeName>
</protein>
<sequence>MSGNPDAFENDPGFPFLGMSREAKAASAARPFDSKKNCWIPDPEDGFVAAEIQSTTGDQVTVVTVKGNQITVKKDQCQEMNPPKFDKTEDMANLTFLNEASVLGNLKDRYKDLMIYTYSGLFCVVINPYKRLPIYSESVIKHFMGKRRNEMPPHLFAVSDEAYRNMVQDKENQSMLITGESGAGKTENTKKVISYFAIVGATQAAAGGKKEEGKKGGTLEEQIVQTNPVLEAFGNAKTVRNNNSSRFGKFIRTHFSGSGKLAGGDIEHYLLEKSRVVRQAPGERCYHIFYQIMSGNDASLRGKLKLNNDITYYHFCSQAELTIEGMDDKEEMRLTQEAFDIMGFEDQETMDLYRSTAGIMHMGEMKFKQRPREEQAEPDGEEDALNAAAMLGINAEEFLKALTKPRVRVGTEWVNKGQNLEQVSWAVSGLAKAIYARMFKWIINRCNKTLDAKEIERKHFIGVLDIAGFEIFDLNSFEQLWINFVNERLQQFFNHHMFVLEQEEYKREGIAWTFIDFGLDLQACIELIEKPLGIISILDEECIVPKATDMTYAQKLLDQHLGKHPNFQKPKPPKGKQGDAHFAIVHYAGTVRYNANNFLEKNKDPLNDTAVALLKHSVDNNLMLDIWQDYQTQEEAAEAAKAGQSGGGKRGKSSSFATVSMIYRESLNNLMNMLYQTHPHFIRCIIPNEKKASGVIDSALVLNQLTCNGVLEGIRICRKGFPNRMLYPDFKHRYAILAADAAKDSDPKKASVGILDKIANDGNLTDEEFKIGETKIFFKAGVLAKLEDLRDEILSRIVTMFQSRIRSYLAKAEVRRRYEQQTGLLIVQRNVRAWCTLRTWEWFKLFGKVKPMLKAGKEQEAMGELAEKIQKLEEAVQRGEIARSQLETQVADLVEEKNALFLSLETEKANLADAEERNEKLNQLKATLESKLTDITGQLEDMQERHEDLTRQKKKTEQELSDTKKHVQDLELTLRKAEQEKQSRDHQIRSLQDEMANQDESVAKLNKEKKHQEESNRKLNEDLQSEEDKVNHLEKIRNKLEQQMDELEETIDREKRSRSDIEKSKRKVEGDLKVAQENIDEITKQKQDVENTLKRKEDDLHHASTKLAEEQALAAKLQRQIKELQARIAELEEELESERNSRQKADRTRNELQRELEEISERLEQQGGFSAAQLEANKKREAEIAKLRREKEEDALNHETAVSSLRKRQVDAVAELTEQLETLQKLKAKGDAERAKLQRDLEEAQHATDSEVRARQEVEKSYKTIEVQFSELQTKADEQSRQLQDFAALKNRLNNENGDLNRTLEEMDNQVNSLHRLKSTLQSQLDETRRNFEEESRERQALAATAKNLEHENEILREHLDEEAESKADLTRQISKLNAEIQQWKARFDSEGLNKLEEIEAAKKALQLKVQELSDTNEGLFAKIASQEKVRHKLMQDLDDAQSDVEKAAAQVAYYEKHRRQFEKIVEEWKKKTDDLASELDAAQRDNRQLSTDLFKAKTANDELAEYLDSTRRENKSLAQEVKDLTDQLGEGGRSVAELQKIVRRLEVEKEELQKALDEAEAALEAEEAKVLRAQIEVSQIRSEIEKRIQEKEEEFENTRRNHQRALESMQATLEAETKQKEEALRIKKKLESDINDLEIALDHANRANADAQKTIKKYMETVRELQVQIEEEQRQKDELREQFLASEKRNGILQAEKDELAQQAEAAERARRNAEADCIELREQNNDLSNQVSSLTGWRRKLEGELLAVHAELEELVTELKNAQEQGQKASADAARLAEELRQEQEHSMHIERIRKGLELQIKEMQIRLDDAENAALKGGKKIIAQLEARIRAIEQELDGEQRRHQDTEKNWRKAERRVKEVEFQVIEEKKNEERLTELVDKLQTKLKIFKRQVEEAEEVAASNLNKYKVLQAQFEQADERAEIAENALSKMRNKIRASASVIPPDGFPLAQSPSSALVRSASNARFL</sequence>
<keyword id="KW-0009">Actin-binding</keyword>
<keyword id="KW-0067">ATP-binding</keyword>
<keyword id="KW-0175">Coiled coil</keyword>
<keyword id="KW-0963">Cytoplasm</keyword>
<keyword id="KW-0488">Methylation</keyword>
<keyword id="KW-0505">Motor protein</keyword>
<keyword id="KW-0514">Muscle protein</keyword>
<keyword id="KW-0518">Myosin</keyword>
<keyword id="KW-0547">Nucleotide-binding</keyword>
<keyword id="KW-1185">Reference proteome</keyword>
<keyword id="KW-0787">Thick filament</keyword>
<dbReference type="EMBL" id="HE601533">
    <property type="protein sequence ID" value="CAP39610.1"/>
    <property type="molecule type" value="Genomic_DNA"/>
</dbReference>
<dbReference type="SMR" id="Q60LV4"/>
<dbReference type="FunCoup" id="Q60LV4">
    <property type="interactions" value="160"/>
</dbReference>
<dbReference type="STRING" id="6238.Q60LV4"/>
<dbReference type="KEGG" id="cbr:CBG_23416"/>
<dbReference type="CTD" id="8578694"/>
<dbReference type="WormBase" id="CBG23416">
    <property type="protein sequence ID" value="CBP46195"/>
    <property type="gene ID" value="WBGene00041777"/>
    <property type="gene designation" value="Cbr-myo-3"/>
</dbReference>
<dbReference type="eggNOG" id="KOG0161">
    <property type="taxonomic scope" value="Eukaryota"/>
</dbReference>
<dbReference type="HOGENOM" id="CLU_000192_8_0_1"/>
<dbReference type="InParanoid" id="Q60LV4"/>
<dbReference type="OMA" id="LWQYRIL"/>
<dbReference type="Proteomes" id="UP000008549">
    <property type="component" value="Unassembled WGS sequence"/>
</dbReference>
<dbReference type="GO" id="GO:0031672">
    <property type="term" value="C:A band"/>
    <property type="evidence" value="ECO:0000250"/>
    <property type="project" value="UniProtKB"/>
</dbReference>
<dbReference type="GO" id="GO:0005737">
    <property type="term" value="C:cytoplasm"/>
    <property type="evidence" value="ECO:0000318"/>
    <property type="project" value="GO_Central"/>
</dbReference>
<dbReference type="GO" id="GO:0032982">
    <property type="term" value="C:myosin filament"/>
    <property type="evidence" value="ECO:0000318"/>
    <property type="project" value="GO_Central"/>
</dbReference>
<dbReference type="GO" id="GO:0016460">
    <property type="term" value="C:myosin II complex"/>
    <property type="evidence" value="ECO:0000318"/>
    <property type="project" value="GO_Central"/>
</dbReference>
<dbReference type="GO" id="GO:0051015">
    <property type="term" value="F:actin filament binding"/>
    <property type="evidence" value="ECO:0000318"/>
    <property type="project" value="GO_Central"/>
</dbReference>
<dbReference type="GO" id="GO:0005524">
    <property type="term" value="F:ATP binding"/>
    <property type="evidence" value="ECO:0007669"/>
    <property type="project" value="UniProtKB-KW"/>
</dbReference>
<dbReference type="GO" id="GO:0003774">
    <property type="term" value="F:cytoskeletal motor activity"/>
    <property type="evidence" value="ECO:0000250"/>
    <property type="project" value="UniProtKB"/>
</dbReference>
<dbReference type="GO" id="GO:0000146">
    <property type="term" value="F:microfilament motor activity"/>
    <property type="evidence" value="ECO:0000318"/>
    <property type="project" value="GO_Central"/>
</dbReference>
<dbReference type="GO" id="GO:0007626">
    <property type="term" value="P:locomotory behavior"/>
    <property type="evidence" value="ECO:0000250"/>
    <property type="project" value="UniProtKB"/>
</dbReference>
<dbReference type="GO" id="GO:0006936">
    <property type="term" value="P:muscle contraction"/>
    <property type="evidence" value="ECO:0000318"/>
    <property type="project" value="GO_Central"/>
</dbReference>
<dbReference type="GO" id="GO:0045214">
    <property type="term" value="P:sarcomere organization"/>
    <property type="evidence" value="ECO:0000318"/>
    <property type="project" value="GO_Central"/>
</dbReference>
<dbReference type="CDD" id="cd01377">
    <property type="entry name" value="MYSc_class_II"/>
    <property type="match status" value="1"/>
</dbReference>
<dbReference type="FunFam" id="1.10.10.820:FF:000001">
    <property type="entry name" value="Myosin heavy chain"/>
    <property type="match status" value="1"/>
</dbReference>
<dbReference type="FunFam" id="1.20.5.340:FF:000036">
    <property type="entry name" value="Myosin heavy chain"/>
    <property type="match status" value="1"/>
</dbReference>
<dbReference type="FunFam" id="1.20.5.370:FF:000008">
    <property type="entry name" value="Myosin heavy chain"/>
    <property type="match status" value="1"/>
</dbReference>
<dbReference type="FunFam" id="1.20.58.530:FF:000001">
    <property type="entry name" value="Myosin heavy chain"/>
    <property type="match status" value="1"/>
</dbReference>
<dbReference type="FunFam" id="2.30.30.360:FF:000001">
    <property type="entry name" value="Myosin heavy chain"/>
    <property type="match status" value="1"/>
</dbReference>
<dbReference type="FunFam" id="1.20.5.4820:FF:000002">
    <property type="entry name" value="Myosin heavy chain 10"/>
    <property type="match status" value="1"/>
</dbReference>
<dbReference type="FunFam" id="1.20.5.340:FF:000019">
    <property type="entry name" value="Myosin heavy chain, isoform G"/>
    <property type="match status" value="1"/>
</dbReference>
<dbReference type="FunFam" id="1.20.5.340:FF:000021">
    <property type="entry name" value="Myosin heavy chain, isoform G"/>
    <property type="match status" value="1"/>
</dbReference>
<dbReference type="FunFam" id="1.20.5.370:FF:000009">
    <property type="entry name" value="Myosin heavy chain, isoform G"/>
    <property type="match status" value="1"/>
</dbReference>
<dbReference type="FunFam" id="1.20.5.370:FF:000010">
    <property type="entry name" value="Myosin heavy chain, isoform G"/>
    <property type="match status" value="1"/>
</dbReference>
<dbReference type="FunFam" id="3.40.850.10:FF:000024">
    <property type="entry name" value="Myosin heavy chain, isoform J"/>
    <property type="match status" value="1"/>
</dbReference>
<dbReference type="FunFam" id="1.20.120.720:FF:000001">
    <property type="entry name" value="Myosin heavy chain, muscle"/>
    <property type="match status" value="1"/>
</dbReference>
<dbReference type="Gene3D" id="1.10.10.820">
    <property type="match status" value="1"/>
</dbReference>
<dbReference type="Gene3D" id="1.20.5.340">
    <property type="match status" value="5"/>
</dbReference>
<dbReference type="Gene3D" id="1.20.5.370">
    <property type="match status" value="5"/>
</dbReference>
<dbReference type="Gene3D" id="1.20.5.4820">
    <property type="match status" value="1"/>
</dbReference>
<dbReference type="Gene3D" id="1.20.58.530">
    <property type="match status" value="1"/>
</dbReference>
<dbReference type="Gene3D" id="3.40.850.10">
    <property type="entry name" value="Kinesin motor domain"/>
    <property type="match status" value="1"/>
</dbReference>
<dbReference type="Gene3D" id="2.30.30.360">
    <property type="entry name" value="Myosin S1 fragment, N-terminal"/>
    <property type="match status" value="1"/>
</dbReference>
<dbReference type="Gene3D" id="1.20.120.720">
    <property type="entry name" value="Myosin VI head, motor domain, U50 subdomain"/>
    <property type="match status" value="1"/>
</dbReference>
<dbReference type="InterPro" id="IPR036961">
    <property type="entry name" value="Kinesin_motor_dom_sf"/>
</dbReference>
<dbReference type="InterPro" id="IPR001609">
    <property type="entry name" value="Myosin_head_motor_dom-like"/>
</dbReference>
<dbReference type="InterPro" id="IPR004009">
    <property type="entry name" value="Myosin_N"/>
</dbReference>
<dbReference type="InterPro" id="IPR008989">
    <property type="entry name" value="Myosin_S1_N"/>
</dbReference>
<dbReference type="InterPro" id="IPR002928">
    <property type="entry name" value="Myosin_tail"/>
</dbReference>
<dbReference type="InterPro" id="IPR027417">
    <property type="entry name" value="P-loop_NTPase"/>
</dbReference>
<dbReference type="InterPro" id="IPR014751">
    <property type="entry name" value="XRCC4-like_C"/>
</dbReference>
<dbReference type="PANTHER" id="PTHR13140">
    <property type="entry name" value="MYOSIN"/>
    <property type="match status" value="1"/>
</dbReference>
<dbReference type="PANTHER" id="PTHR13140:SF857">
    <property type="entry name" value="MYOSIN-11"/>
    <property type="match status" value="1"/>
</dbReference>
<dbReference type="Pfam" id="PF00063">
    <property type="entry name" value="Myosin_head"/>
    <property type="match status" value="1"/>
</dbReference>
<dbReference type="Pfam" id="PF02736">
    <property type="entry name" value="Myosin_N"/>
    <property type="match status" value="1"/>
</dbReference>
<dbReference type="Pfam" id="PF01576">
    <property type="entry name" value="Myosin_tail_1"/>
    <property type="match status" value="1"/>
</dbReference>
<dbReference type="PRINTS" id="PR00193">
    <property type="entry name" value="MYOSINHEAVY"/>
</dbReference>
<dbReference type="SMART" id="SM00242">
    <property type="entry name" value="MYSc"/>
    <property type="match status" value="1"/>
</dbReference>
<dbReference type="SUPFAM" id="SSF90257">
    <property type="entry name" value="Myosin rod fragments"/>
    <property type="match status" value="4"/>
</dbReference>
<dbReference type="SUPFAM" id="SSF52540">
    <property type="entry name" value="P-loop containing nucleoside triphosphate hydrolases"/>
    <property type="match status" value="1"/>
</dbReference>
<dbReference type="SUPFAM" id="SSF57997">
    <property type="entry name" value="Tropomyosin"/>
    <property type="match status" value="1"/>
</dbReference>
<dbReference type="PROSITE" id="PS50096">
    <property type="entry name" value="IQ"/>
    <property type="match status" value="1"/>
</dbReference>
<dbReference type="PROSITE" id="PS51456">
    <property type="entry name" value="MYOSIN_MOTOR"/>
    <property type="match status" value="1"/>
</dbReference>
<dbReference type="PROSITE" id="PS51844">
    <property type="entry name" value="SH3_LIKE"/>
    <property type="match status" value="1"/>
</dbReference>
<accession>Q60LV4</accession>
<accession>A8Y3Z1</accession>
<feature type="chain" id="PRO_0000306245" description="Myosin-3">
    <location>
        <begin position="1"/>
        <end position="1969"/>
    </location>
</feature>
<feature type="domain" description="Myosin N-terminal SH3-like" evidence="5">
    <location>
        <begin position="33"/>
        <end position="82"/>
    </location>
</feature>
<feature type="domain" description="Myosin motor" evidence="4">
    <location>
        <begin position="86"/>
        <end position="791"/>
    </location>
</feature>
<feature type="domain" description="IQ" evidence="3">
    <location>
        <begin position="794"/>
        <end position="823"/>
    </location>
</feature>
<feature type="region of interest" description="Actin-binding" evidence="1">
    <location>
        <begin position="667"/>
        <end position="689"/>
    </location>
</feature>
<feature type="region of interest" description="Actin-binding" evidence="1">
    <location>
        <begin position="770"/>
        <end position="784"/>
    </location>
</feature>
<feature type="region of interest" description="Disordered" evidence="6">
    <location>
        <begin position="943"/>
        <end position="967"/>
    </location>
</feature>
<feature type="region of interest" description="Disordered" evidence="6">
    <location>
        <begin position="993"/>
        <end position="1029"/>
    </location>
</feature>
<feature type="region of interest" description="Disordered" evidence="6">
    <location>
        <begin position="1134"/>
        <end position="1153"/>
    </location>
</feature>
<feature type="coiled-coil region" evidence="2">
    <location>
        <begin position="853"/>
        <end position="1941"/>
    </location>
</feature>
<feature type="compositionally biased region" description="Basic and acidic residues" evidence="6">
    <location>
        <begin position="1001"/>
        <end position="1029"/>
    </location>
</feature>
<feature type="compositionally biased region" description="Basic and acidic residues" evidence="6">
    <location>
        <begin position="1137"/>
        <end position="1153"/>
    </location>
</feature>
<feature type="binding site" evidence="1">
    <location>
        <begin position="179"/>
        <end position="186"/>
    </location>
    <ligand>
        <name>ATP</name>
        <dbReference type="ChEBI" id="CHEBI:30616"/>
    </ligand>
</feature>
<feature type="modified residue" description="N6,N6,N6-trimethyllysine" evidence="2">
    <location>
        <position position="130"/>
    </location>
</feature>
<proteinExistence type="inferred from homology"/>
<evidence type="ECO:0000250" key="1">
    <source>
        <dbReference type="UniProtKB" id="P12844"/>
    </source>
</evidence>
<evidence type="ECO:0000255" key="2"/>
<evidence type="ECO:0000255" key="3">
    <source>
        <dbReference type="PROSITE-ProRule" id="PRU00116"/>
    </source>
</evidence>
<evidence type="ECO:0000255" key="4">
    <source>
        <dbReference type="PROSITE-ProRule" id="PRU00782"/>
    </source>
</evidence>
<evidence type="ECO:0000255" key="5">
    <source>
        <dbReference type="PROSITE-ProRule" id="PRU01190"/>
    </source>
</evidence>
<evidence type="ECO:0000256" key="6">
    <source>
        <dbReference type="SAM" id="MobiDB-lite"/>
    </source>
</evidence>
<evidence type="ECO:0000305" key="7"/>
<reference key="1">
    <citation type="journal article" date="2003" name="PLoS Biol.">
        <title>The genome sequence of Caenorhabditis briggsae: a platform for comparative genomics.</title>
        <authorList>
            <person name="Stein L.D."/>
            <person name="Bao Z."/>
            <person name="Blasiar D."/>
            <person name="Blumenthal T."/>
            <person name="Brent M.R."/>
            <person name="Chen N."/>
            <person name="Chinwalla A."/>
            <person name="Clarke L."/>
            <person name="Clee C."/>
            <person name="Coghlan A."/>
            <person name="Coulson A."/>
            <person name="D'Eustachio P."/>
            <person name="Fitch D.H.A."/>
            <person name="Fulton L.A."/>
            <person name="Fulton R.E."/>
            <person name="Griffiths-Jones S."/>
            <person name="Harris T.W."/>
            <person name="Hillier L.W."/>
            <person name="Kamath R."/>
            <person name="Kuwabara P.E."/>
            <person name="Mardis E.R."/>
            <person name="Marra M.A."/>
            <person name="Miner T.L."/>
            <person name="Minx P."/>
            <person name="Mullikin J.C."/>
            <person name="Plumb R.W."/>
            <person name="Rogers J."/>
            <person name="Schein J.E."/>
            <person name="Sohrmann M."/>
            <person name="Spieth J."/>
            <person name="Stajich J.E."/>
            <person name="Wei C."/>
            <person name="Willey D."/>
            <person name="Wilson R.K."/>
            <person name="Durbin R.M."/>
            <person name="Waterston R.H."/>
        </authorList>
    </citation>
    <scope>NUCLEOTIDE SEQUENCE [LARGE SCALE GENOMIC DNA]</scope>
    <source>
        <strain>AF16</strain>
    </source>
</reference>
<gene>
    <name evidence="1" type="primary">myo-3</name>
    <name type="ORF">CBG23416</name>
</gene>